<gene>
    <name type="ordered locus">YPN_2156</name>
    <name type="ORF">YP516_2409</name>
</gene>
<dbReference type="EMBL" id="CP000305">
    <property type="protein sequence ID" value="ABG18485.1"/>
    <property type="molecule type" value="Genomic_DNA"/>
</dbReference>
<dbReference type="EMBL" id="ACNQ01000013">
    <property type="protein sequence ID" value="EEO76212.1"/>
    <property type="molecule type" value="Genomic_DNA"/>
</dbReference>
<dbReference type="RefSeq" id="WP_002210286.1">
    <property type="nucleotide sequence ID" value="NZ_ACNQ01000013.1"/>
</dbReference>
<dbReference type="SMR" id="Q1CHP5"/>
<dbReference type="KEGG" id="ypn:YPN_2156"/>
<dbReference type="HOGENOM" id="CLU_101021_1_0_6"/>
<dbReference type="Proteomes" id="UP000008936">
    <property type="component" value="Chromosome"/>
</dbReference>
<dbReference type="Gene3D" id="1.10.287.680">
    <property type="entry name" value="Helix hairpin bin"/>
    <property type="match status" value="1"/>
</dbReference>
<dbReference type="Gene3D" id="1.10.3190.10">
    <property type="entry name" value="yfbu gene product, domain 2"/>
    <property type="match status" value="1"/>
</dbReference>
<dbReference type="HAMAP" id="MF_00762">
    <property type="entry name" value="UPF0304"/>
    <property type="match status" value="1"/>
</dbReference>
<dbReference type="InterPro" id="IPR005587">
    <property type="entry name" value="UPF0304_YfbU"/>
</dbReference>
<dbReference type="InterPro" id="IPR023146">
    <property type="entry name" value="YfbU_alpha-helical_sf"/>
</dbReference>
<dbReference type="InterPro" id="IPR023145">
    <property type="entry name" value="YfbU_helix-hairpin_sf"/>
</dbReference>
<dbReference type="NCBIfam" id="NF003936">
    <property type="entry name" value="PRK05445.1"/>
    <property type="match status" value="1"/>
</dbReference>
<dbReference type="Pfam" id="PF03887">
    <property type="entry name" value="YfbU"/>
    <property type="match status" value="1"/>
</dbReference>
<dbReference type="PIRSF" id="PIRSF006272">
    <property type="entry name" value="UCP006272"/>
    <property type="match status" value="1"/>
</dbReference>
<dbReference type="SUPFAM" id="SSF116960">
    <property type="entry name" value="YfbU-like"/>
    <property type="match status" value="1"/>
</dbReference>
<reference key="1">
    <citation type="journal article" date="2006" name="J. Bacteriol.">
        <title>Complete genome sequence of Yersinia pestis strains Antiqua and Nepal516: evidence of gene reduction in an emerging pathogen.</title>
        <authorList>
            <person name="Chain P.S.G."/>
            <person name="Hu P."/>
            <person name="Malfatti S.A."/>
            <person name="Radnedge L."/>
            <person name="Larimer F."/>
            <person name="Vergez L.M."/>
            <person name="Worsham P."/>
            <person name="Chu M.C."/>
            <person name="Andersen G.L."/>
        </authorList>
    </citation>
    <scope>NUCLEOTIDE SEQUENCE [LARGE SCALE GENOMIC DNA]</scope>
    <source>
        <strain>Nepal516</strain>
    </source>
</reference>
<reference key="2">
    <citation type="submission" date="2009-04" db="EMBL/GenBank/DDBJ databases">
        <title>Yersinia pestis Nepal516A whole genome shotgun sequencing project.</title>
        <authorList>
            <person name="Plunkett G. III"/>
            <person name="Anderson B.D."/>
            <person name="Baumler D.J."/>
            <person name="Burland V."/>
            <person name="Cabot E.L."/>
            <person name="Glasner J.D."/>
            <person name="Mau B."/>
            <person name="Neeno-Eckwall E."/>
            <person name="Perna N.T."/>
            <person name="Munk A.C."/>
            <person name="Tapia R."/>
            <person name="Green L.D."/>
            <person name="Rogers Y.C."/>
            <person name="Detter J.C."/>
            <person name="Bruce D.C."/>
            <person name="Brettin T.S."/>
        </authorList>
    </citation>
    <scope>NUCLEOTIDE SEQUENCE [LARGE SCALE GENOMIC DNA]</scope>
    <source>
        <strain>Nepal516</strain>
    </source>
</reference>
<comment type="similarity">
    <text evidence="1">Belongs to the UPF0304 family.</text>
</comment>
<protein>
    <recommendedName>
        <fullName evidence="1">UPF0304 protein YPN_2156</fullName>
    </recommendedName>
</protein>
<sequence length="164" mass="19492">MDMTNAQRLILSNQYKMMTMLDPENAERYRRQQTIVERGFGLQMRELDRDFGEMSEDTCRTIINIMEMHHALQVSWGNLKEKQDLDERRISFLGFDAATESRYLSYVRFMVNTEGRYTHFDSGTHGFNSQTPMWDKYQRMLAIWQSCPRQYHLSAVEISQIINA</sequence>
<feature type="chain" id="PRO_1000046771" description="UPF0304 protein YPN_2156">
    <location>
        <begin position="1"/>
        <end position="164"/>
    </location>
</feature>
<evidence type="ECO:0000255" key="1">
    <source>
        <dbReference type="HAMAP-Rule" id="MF_00762"/>
    </source>
</evidence>
<accession>Q1CHP5</accession>
<accession>C4GV84</accession>
<proteinExistence type="inferred from homology"/>
<organism>
    <name type="scientific">Yersinia pestis bv. Antiqua (strain Nepal516)</name>
    <dbReference type="NCBI Taxonomy" id="377628"/>
    <lineage>
        <taxon>Bacteria</taxon>
        <taxon>Pseudomonadati</taxon>
        <taxon>Pseudomonadota</taxon>
        <taxon>Gammaproteobacteria</taxon>
        <taxon>Enterobacterales</taxon>
        <taxon>Yersiniaceae</taxon>
        <taxon>Yersinia</taxon>
    </lineage>
</organism>
<name>Y2156_YERPN</name>